<reference key="1">
    <citation type="submission" date="2008-01" db="EMBL/GenBank/DDBJ databases">
        <title>Complete sequence of Pseudomonas putida GB-1.</title>
        <authorList>
            <consortium name="US DOE Joint Genome Institute"/>
            <person name="Copeland A."/>
            <person name="Lucas S."/>
            <person name="Lapidus A."/>
            <person name="Barry K."/>
            <person name="Glavina del Rio T."/>
            <person name="Dalin E."/>
            <person name="Tice H."/>
            <person name="Pitluck S."/>
            <person name="Bruce D."/>
            <person name="Goodwin L."/>
            <person name="Chertkov O."/>
            <person name="Brettin T."/>
            <person name="Detter J.C."/>
            <person name="Han C."/>
            <person name="Kuske C.R."/>
            <person name="Schmutz J."/>
            <person name="Larimer F."/>
            <person name="Land M."/>
            <person name="Hauser L."/>
            <person name="Kyrpides N."/>
            <person name="Kim E."/>
            <person name="McCarthy J.K."/>
            <person name="Richardson P."/>
        </authorList>
    </citation>
    <scope>NUCLEOTIDE SEQUENCE [LARGE SCALE GENOMIC DNA]</scope>
    <source>
        <strain>GB-1</strain>
    </source>
</reference>
<name>SYC_PSEPG</name>
<dbReference type="EC" id="6.1.1.16" evidence="1"/>
<dbReference type="EMBL" id="CP000926">
    <property type="protein sequence ID" value="ABY98772.1"/>
    <property type="molecule type" value="Genomic_DNA"/>
</dbReference>
<dbReference type="RefSeq" id="WP_012272509.1">
    <property type="nucleotide sequence ID" value="NC_010322.1"/>
</dbReference>
<dbReference type="SMR" id="B0KUU0"/>
<dbReference type="KEGG" id="ppg:PputGB1_2878"/>
<dbReference type="eggNOG" id="COG0215">
    <property type="taxonomic scope" value="Bacteria"/>
</dbReference>
<dbReference type="HOGENOM" id="CLU_013528_0_1_6"/>
<dbReference type="Proteomes" id="UP000002157">
    <property type="component" value="Chromosome"/>
</dbReference>
<dbReference type="GO" id="GO:0005829">
    <property type="term" value="C:cytosol"/>
    <property type="evidence" value="ECO:0007669"/>
    <property type="project" value="TreeGrafter"/>
</dbReference>
<dbReference type="GO" id="GO:0005524">
    <property type="term" value="F:ATP binding"/>
    <property type="evidence" value="ECO:0007669"/>
    <property type="project" value="UniProtKB-UniRule"/>
</dbReference>
<dbReference type="GO" id="GO:0004817">
    <property type="term" value="F:cysteine-tRNA ligase activity"/>
    <property type="evidence" value="ECO:0007669"/>
    <property type="project" value="UniProtKB-UniRule"/>
</dbReference>
<dbReference type="GO" id="GO:0008270">
    <property type="term" value="F:zinc ion binding"/>
    <property type="evidence" value="ECO:0007669"/>
    <property type="project" value="UniProtKB-UniRule"/>
</dbReference>
<dbReference type="GO" id="GO:0006423">
    <property type="term" value="P:cysteinyl-tRNA aminoacylation"/>
    <property type="evidence" value="ECO:0007669"/>
    <property type="project" value="UniProtKB-UniRule"/>
</dbReference>
<dbReference type="CDD" id="cd07963">
    <property type="entry name" value="Anticodon_Ia_Cys"/>
    <property type="match status" value="1"/>
</dbReference>
<dbReference type="CDD" id="cd00672">
    <property type="entry name" value="CysRS_core"/>
    <property type="match status" value="1"/>
</dbReference>
<dbReference type="FunFam" id="3.40.50.620:FF:000009">
    <property type="entry name" value="Cysteine--tRNA ligase"/>
    <property type="match status" value="1"/>
</dbReference>
<dbReference type="Gene3D" id="1.20.120.1910">
    <property type="entry name" value="Cysteine-tRNA ligase, C-terminal anti-codon recognition domain"/>
    <property type="match status" value="1"/>
</dbReference>
<dbReference type="Gene3D" id="3.40.50.620">
    <property type="entry name" value="HUPs"/>
    <property type="match status" value="1"/>
</dbReference>
<dbReference type="HAMAP" id="MF_00041">
    <property type="entry name" value="Cys_tRNA_synth"/>
    <property type="match status" value="1"/>
</dbReference>
<dbReference type="InterPro" id="IPR015803">
    <property type="entry name" value="Cys-tRNA-ligase"/>
</dbReference>
<dbReference type="InterPro" id="IPR015273">
    <property type="entry name" value="Cys-tRNA-synt_Ia_DALR"/>
</dbReference>
<dbReference type="InterPro" id="IPR024909">
    <property type="entry name" value="Cys-tRNA/MSH_ligase"/>
</dbReference>
<dbReference type="InterPro" id="IPR056411">
    <property type="entry name" value="CysS_C"/>
</dbReference>
<dbReference type="InterPro" id="IPR014729">
    <property type="entry name" value="Rossmann-like_a/b/a_fold"/>
</dbReference>
<dbReference type="InterPro" id="IPR032678">
    <property type="entry name" value="tRNA-synt_1_cat_dom"/>
</dbReference>
<dbReference type="InterPro" id="IPR009080">
    <property type="entry name" value="tRNAsynth_Ia_anticodon-bd"/>
</dbReference>
<dbReference type="NCBIfam" id="TIGR00435">
    <property type="entry name" value="cysS"/>
    <property type="match status" value="1"/>
</dbReference>
<dbReference type="PANTHER" id="PTHR10890:SF3">
    <property type="entry name" value="CYSTEINE--TRNA LIGASE, CYTOPLASMIC"/>
    <property type="match status" value="1"/>
</dbReference>
<dbReference type="PANTHER" id="PTHR10890">
    <property type="entry name" value="CYSTEINYL-TRNA SYNTHETASE"/>
    <property type="match status" value="1"/>
</dbReference>
<dbReference type="Pfam" id="PF23493">
    <property type="entry name" value="CysS_C"/>
    <property type="match status" value="1"/>
</dbReference>
<dbReference type="Pfam" id="PF09190">
    <property type="entry name" value="DALR_2"/>
    <property type="match status" value="1"/>
</dbReference>
<dbReference type="Pfam" id="PF01406">
    <property type="entry name" value="tRNA-synt_1e"/>
    <property type="match status" value="1"/>
</dbReference>
<dbReference type="PRINTS" id="PR00983">
    <property type="entry name" value="TRNASYNTHCYS"/>
</dbReference>
<dbReference type="SMART" id="SM00840">
    <property type="entry name" value="DALR_2"/>
    <property type="match status" value="1"/>
</dbReference>
<dbReference type="SUPFAM" id="SSF47323">
    <property type="entry name" value="Anticodon-binding domain of a subclass of class I aminoacyl-tRNA synthetases"/>
    <property type="match status" value="1"/>
</dbReference>
<dbReference type="SUPFAM" id="SSF52374">
    <property type="entry name" value="Nucleotidylyl transferase"/>
    <property type="match status" value="1"/>
</dbReference>
<keyword id="KW-0030">Aminoacyl-tRNA synthetase</keyword>
<keyword id="KW-0067">ATP-binding</keyword>
<keyword id="KW-0963">Cytoplasm</keyword>
<keyword id="KW-0436">Ligase</keyword>
<keyword id="KW-0479">Metal-binding</keyword>
<keyword id="KW-0547">Nucleotide-binding</keyword>
<keyword id="KW-0648">Protein biosynthesis</keyword>
<keyword id="KW-0862">Zinc</keyword>
<comment type="catalytic activity">
    <reaction evidence="1">
        <text>tRNA(Cys) + L-cysteine + ATP = L-cysteinyl-tRNA(Cys) + AMP + diphosphate</text>
        <dbReference type="Rhea" id="RHEA:17773"/>
        <dbReference type="Rhea" id="RHEA-COMP:9661"/>
        <dbReference type="Rhea" id="RHEA-COMP:9679"/>
        <dbReference type="ChEBI" id="CHEBI:30616"/>
        <dbReference type="ChEBI" id="CHEBI:33019"/>
        <dbReference type="ChEBI" id="CHEBI:35235"/>
        <dbReference type="ChEBI" id="CHEBI:78442"/>
        <dbReference type="ChEBI" id="CHEBI:78517"/>
        <dbReference type="ChEBI" id="CHEBI:456215"/>
        <dbReference type="EC" id="6.1.1.16"/>
    </reaction>
</comment>
<comment type="cofactor">
    <cofactor evidence="1">
        <name>Zn(2+)</name>
        <dbReference type="ChEBI" id="CHEBI:29105"/>
    </cofactor>
    <text evidence="1">Binds 1 zinc ion per subunit.</text>
</comment>
<comment type="subunit">
    <text evidence="1">Monomer.</text>
</comment>
<comment type="subcellular location">
    <subcellularLocation>
        <location evidence="1">Cytoplasm</location>
    </subcellularLocation>
</comment>
<comment type="similarity">
    <text evidence="1">Belongs to the class-I aminoacyl-tRNA synthetase family.</text>
</comment>
<gene>
    <name evidence="1" type="primary">cysS</name>
    <name type="ordered locus">PputGB1_2878</name>
</gene>
<protein>
    <recommendedName>
        <fullName evidence="1">Cysteine--tRNA ligase</fullName>
        <ecNumber evidence="1">6.1.1.16</ecNumber>
    </recommendedName>
    <alternativeName>
        <fullName evidence="1">Cysteinyl-tRNA synthetase</fullName>
        <shortName evidence="1">CysRS</shortName>
    </alternativeName>
</protein>
<accession>B0KUU0</accession>
<evidence type="ECO:0000255" key="1">
    <source>
        <dbReference type="HAMAP-Rule" id="MF_00041"/>
    </source>
</evidence>
<sequence length="460" mass="51652">MLTIYNTLSKAKETFKPLDGNKVRMYVCGMTVYDYCHLGHGRSMVAFDLVTRWLRKSGYDLTYVRNITDIDDKIINRANENGETFDALTARMIDAMHEDERRLNILPPDQEPRATDHIAGMHAMIQTLIDKGYAYAPGNGDVYYRVGKFVGYGKLSRKKIEDLRIGARIEVDEAKQDPLDFVLWKGVKPGEPSWESPWGPGRPGWHIECSVMSTCCLGESFDIHGGGSDLEFPHHENEIAQSEAATGKQYANAWMHCGMIRINGEKMSKSLNNFFTIRDVLEKYHPEVVRYLLVASHYRSAINYSEDSLRDAKGALERFYHALRGLPRVAAKGGEAFVERFSMAMNDDFGTPEACAVLFDLVREINRLRDSDLEAAAGLAGRLRELGDVLGVLQLEADDFLRAGAEGKVDAAEVEGLIQARLQARTDKNWAESDRIRDQLTAMGVVLEDSKGATTWRLAD</sequence>
<organism>
    <name type="scientific">Pseudomonas putida (strain GB-1)</name>
    <dbReference type="NCBI Taxonomy" id="76869"/>
    <lineage>
        <taxon>Bacteria</taxon>
        <taxon>Pseudomonadati</taxon>
        <taxon>Pseudomonadota</taxon>
        <taxon>Gammaproteobacteria</taxon>
        <taxon>Pseudomonadales</taxon>
        <taxon>Pseudomonadaceae</taxon>
        <taxon>Pseudomonas</taxon>
    </lineage>
</organism>
<proteinExistence type="inferred from homology"/>
<feature type="chain" id="PRO_0000332881" description="Cysteine--tRNA ligase">
    <location>
        <begin position="1"/>
        <end position="460"/>
    </location>
</feature>
<feature type="short sequence motif" description="'HIGH' region">
    <location>
        <begin position="30"/>
        <end position="40"/>
    </location>
</feature>
<feature type="short sequence motif" description="'KMSKS' region">
    <location>
        <begin position="266"/>
        <end position="270"/>
    </location>
</feature>
<feature type="binding site" evidence="1">
    <location>
        <position position="28"/>
    </location>
    <ligand>
        <name>Zn(2+)</name>
        <dbReference type="ChEBI" id="CHEBI:29105"/>
    </ligand>
</feature>
<feature type="binding site" evidence="1">
    <location>
        <position position="209"/>
    </location>
    <ligand>
        <name>Zn(2+)</name>
        <dbReference type="ChEBI" id="CHEBI:29105"/>
    </ligand>
</feature>
<feature type="binding site" evidence="1">
    <location>
        <position position="234"/>
    </location>
    <ligand>
        <name>Zn(2+)</name>
        <dbReference type="ChEBI" id="CHEBI:29105"/>
    </ligand>
</feature>
<feature type="binding site" evidence="1">
    <location>
        <position position="238"/>
    </location>
    <ligand>
        <name>Zn(2+)</name>
        <dbReference type="ChEBI" id="CHEBI:29105"/>
    </ligand>
</feature>
<feature type="binding site" evidence="1">
    <location>
        <position position="269"/>
    </location>
    <ligand>
        <name>ATP</name>
        <dbReference type="ChEBI" id="CHEBI:30616"/>
    </ligand>
</feature>